<name>INS2_RAT</name>
<feature type="signal peptide" evidence="2">
    <location>
        <begin position="1"/>
        <end position="24"/>
    </location>
</feature>
<feature type="peptide" id="PRO_0000015898" description="Insulin-2 B chain" evidence="3">
    <location>
        <begin position="25"/>
        <end position="54"/>
    </location>
</feature>
<feature type="propeptide" id="PRO_0000015899" description="C peptide">
    <location>
        <begin position="57"/>
        <end position="87"/>
    </location>
</feature>
<feature type="peptide" id="PRO_0000015900" description="Insulin-2 A chain" evidence="3">
    <location>
        <begin position="90"/>
        <end position="110"/>
    </location>
</feature>
<feature type="disulfide bond" description="Interchain (between B and A chains)" evidence="1">
    <location>
        <begin position="31"/>
        <end position="96"/>
    </location>
</feature>
<feature type="disulfide bond" description="Interchain (between B and A chains)" evidence="1">
    <location>
        <begin position="43"/>
        <end position="109"/>
    </location>
</feature>
<feature type="disulfide bond" evidence="2">
    <location>
        <begin position="95"/>
        <end position="100"/>
    </location>
</feature>
<keyword id="KW-0119">Carbohydrate metabolism</keyword>
<keyword id="KW-0165">Cleavage on pair of basic residues</keyword>
<keyword id="KW-0903">Direct protein sequencing</keyword>
<keyword id="KW-1015">Disulfide bond</keyword>
<keyword id="KW-0313">Glucose metabolism</keyword>
<keyword id="KW-0372">Hormone</keyword>
<keyword id="KW-1185">Reference proteome</keyword>
<keyword id="KW-0964">Secreted</keyword>
<keyword id="KW-0732">Signal</keyword>
<comment type="function">
    <text>Insulin decreases blood glucose concentration. It increases cell permeability to monosaccharides, amino acids and fatty acids. It accelerates glycolysis, the pentose phosphate cycle, and glycogen synthesis in liver.</text>
</comment>
<comment type="subunit">
    <text evidence="1">Heterodimer of a B chain and an A chain linked by two disulfide bonds.</text>
</comment>
<comment type="subcellular location">
    <subcellularLocation>
        <location>Secreted</location>
    </subcellularLocation>
</comment>
<comment type="similarity">
    <text evidence="4">Belongs to the insulin family.</text>
</comment>
<organism>
    <name type="scientific">Rattus norvegicus</name>
    <name type="common">Rat</name>
    <dbReference type="NCBI Taxonomy" id="10116"/>
    <lineage>
        <taxon>Eukaryota</taxon>
        <taxon>Metazoa</taxon>
        <taxon>Chordata</taxon>
        <taxon>Craniata</taxon>
        <taxon>Vertebrata</taxon>
        <taxon>Euteleostomi</taxon>
        <taxon>Mammalia</taxon>
        <taxon>Eutheria</taxon>
        <taxon>Euarchontoglires</taxon>
        <taxon>Glires</taxon>
        <taxon>Rodentia</taxon>
        <taxon>Myomorpha</taxon>
        <taxon>Muroidea</taxon>
        <taxon>Muridae</taxon>
        <taxon>Murinae</taxon>
        <taxon>Rattus</taxon>
    </lineage>
</organism>
<protein>
    <recommendedName>
        <fullName>Insulin-2</fullName>
    </recommendedName>
    <component>
        <recommendedName>
            <fullName>Insulin-2 B chain</fullName>
        </recommendedName>
    </component>
    <component>
        <recommendedName>
            <fullName>Insulin-2 A chain</fullName>
        </recommendedName>
    </component>
</protein>
<accession>P01323</accession>
<proteinExistence type="evidence at protein level"/>
<evidence type="ECO:0000250" key="1">
    <source>
        <dbReference type="UniProtKB" id="P01308"/>
    </source>
</evidence>
<evidence type="ECO:0000269" key="2">
    <source>
    </source>
</evidence>
<evidence type="ECO:0000269" key="3">
    <source>
    </source>
</evidence>
<evidence type="ECO:0000305" key="4"/>
<reference key="1">
    <citation type="journal article" date="1979" name="Cell">
        <title>The structure and evolution of the two nonallelic rat preproinsulin genes.</title>
        <authorList>
            <person name="Lomedico P."/>
            <person name="Rosenthal N."/>
            <person name="Efstratiadis A."/>
            <person name="Gilbert W."/>
            <person name="Kolodner R."/>
            <person name="Tizard R."/>
        </authorList>
    </citation>
    <scope>NUCLEOTIDE SEQUENCE [GENOMIC DNA]</scope>
    <source>
        <strain>Sprague-Dawley</strain>
        <tissue>Liver</tissue>
    </source>
</reference>
<reference key="2">
    <citation type="journal article" date="1985" name="Mol. Cell. Biol.">
        <title>RNA-mediated gene duplication: the rat preproinsulin I gene is a functional retroposon.</title>
        <authorList>
            <person name="Soares M.B."/>
            <person name="Schin E."/>
            <person name="Henderson A."/>
            <person name="Karathanasis S.K."/>
            <person name="Cate R."/>
            <person name="Zeitlin S."/>
            <person name="Chirgwin J."/>
            <person name="Efstratiadis A."/>
        </authorList>
    </citation>
    <scope>NUCLEOTIDE SEQUENCE [GENOMIC DNA]</scope>
</reference>
<reference key="3">
    <citation type="journal article" date="1980" name="Ann. N. Y. Acad. Sci.">
        <title>The structure of rat preproinsulin genes.</title>
        <authorList>
            <person name="Lomedico P.T."/>
            <person name="Rosenthal N."/>
            <person name="Kolodner R."/>
            <person name="Efstratiadis A."/>
            <person name="Gilbert W."/>
        </authorList>
    </citation>
    <scope>NUCLEOTIDE SEQUENCE [GENOMIC DNA]</scope>
</reference>
<reference key="4">
    <citation type="journal article" date="1969" name="Recent Prog. Horm. Res.">
        <title>Proinsulin and the biosynthesis of insulin.</title>
        <authorList>
            <person name="Steiner D.F."/>
            <person name="Clark J.L."/>
            <person name="Nolan C."/>
            <person name="Rubenstein A.H."/>
            <person name="Margoliash E."/>
            <person name="Aten B."/>
            <person name="Oyer P.E."/>
        </authorList>
    </citation>
    <scope>PROTEIN SEQUENCE OF 25-54 AND 90-110</scope>
</reference>
<reference key="5">
    <citation type="journal article" date="1972" name="J. Biol. Chem.">
        <title>Primary structures of the proinsulin connecting peptides of the rat and the horse.</title>
        <authorList>
            <person name="Tager H.S."/>
            <person name="Steiner D.F."/>
        </authorList>
    </citation>
    <scope>PROTEIN SEQUENCE OF 57-87</scope>
</reference>
<reference key="6">
    <citation type="journal article" date="1972" name="Eur. J. Biochem.">
        <title>Rat-proinsulin C-peptides. Amino-acid sequences.</title>
        <authorList>
            <person name="Markussen J."/>
            <person name="Sundby F."/>
        </authorList>
    </citation>
    <scope>PROTEIN SEQUENCE OF 57-87</scope>
    <scope>SEQUENCE REVISION</scope>
</reference>
<dbReference type="EMBL" id="V01243">
    <property type="protein sequence ID" value="CAA24560.1"/>
    <property type="molecule type" value="Genomic_DNA"/>
</dbReference>
<dbReference type="EMBL" id="J00748">
    <property type="protein sequence ID" value="AAA41443.1"/>
    <property type="molecule type" value="Genomic_DNA"/>
</dbReference>
<dbReference type="EMBL" id="M25585">
    <property type="protein sequence ID" value="AAA41440.1"/>
    <property type="molecule type" value="Genomic_DNA"/>
</dbReference>
<dbReference type="EMBL" id="M25583">
    <property type="protein sequence ID" value="AAA41440.1"/>
    <property type="status" value="JOINED"/>
    <property type="molecule type" value="Genomic_DNA"/>
</dbReference>
<dbReference type="PIR" id="B90789">
    <property type="entry name" value="IPRT2"/>
</dbReference>
<dbReference type="RefSeq" id="NP_062003.1">
    <property type="nucleotide sequence ID" value="NM_019130.2"/>
</dbReference>
<dbReference type="SMR" id="P01323"/>
<dbReference type="BioGRID" id="246665">
    <property type="interactions" value="1"/>
</dbReference>
<dbReference type="FunCoup" id="P01323">
    <property type="interactions" value="629"/>
</dbReference>
<dbReference type="STRING" id="10116.ENSRNOP00000027656"/>
<dbReference type="PhosphoSitePlus" id="P01323"/>
<dbReference type="PaxDb" id="10116-ENSRNOP00000027656"/>
<dbReference type="Ensembl" id="ENSRNOT00000027656.4">
    <property type="protein sequence ID" value="ENSRNOP00000027656.1"/>
    <property type="gene ID" value="ENSRNOG00000020405.4"/>
</dbReference>
<dbReference type="GeneID" id="24506"/>
<dbReference type="KEGG" id="rno:24506"/>
<dbReference type="AGR" id="RGD:2916"/>
<dbReference type="CTD" id="16334"/>
<dbReference type="RGD" id="2916">
    <property type="gene designation" value="Ins2"/>
</dbReference>
<dbReference type="eggNOG" id="ENOG502S5P5">
    <property type="taxonomic scope" value="Eukaryota"/>
</dbReference>
<dbReference type="GeneTree" id="ENSGT00390000015440"/>
<dbReference type="HOGENOM" id="CLU_140421_1_0_1"/>
<dbReference type="InParanoid" id="P01323"/>
<dbReference type="OrthoDB" id="10019596at2759"/>
<dbReference type="PhylomeDB" id="P01323"/>
<dbReference type="TreeFam" id="TF332820"/>
<dbReference type="PRO" id="PR:P01323"/>
<dbReference type="Proteomes" id="UP000002494">
    <property type="component" value="Chromosome 1"/>
</dbReference>
<dbReference type="Bgee" id="ENSRNOG00000020405">
    <property type="expression patterns" value="Expressed in pancreas and 8 other cell types or tissues"/>
</dbReference>
<dbReference type="GO" id="GO:0005737">
    <property type="term" value="C:cytoplasm"/>
    <property type="evidence" value="ECO:0000266"/>
    <property type="project" value="RGD"/>
</dbReference>
<dbReference type="GO" id="GO:0005829">
    <property type="term" value="C:cytosol"/>
    <property type="evidence" value="ECO:0000266"/>
    <property type="project" value="RGD"/>
</dbReference>
<dbReference type="GO" id="GO:0005615">
    <property type="term" value="C:extracellular space"/>
    <property type="evidence" value="ECO:0000314"/>
    <property type="project" value="RGD"/>
</dbReference>
<dbReference type="GO" id="GO:0005634">
    <property type="term" value="C:nucleus"/>
    <property type="evidence" value="ECO:0000266"/>
    <property type="project" value="RGD"/>
</dbReference>
<dbReference type="GO" id="GO:0030141">
    <property type="term" value="C:secretory granule"/>
    <property type="evidence" value="ECO:0000314"/>
    <property type="project" value="RGD"/>
</dbReference>
<dbReference type="GO" id="GO:0005732">
    <property type="term" value="C:sno(s)RNA-containing ribonucleoprotein complex"/>
    <property type="evidence" value="ECO:0000266"/>
    <property type="project" value="RGD"/>
</dbReference>
<dbReference type="GO" id="GO:0005179">
    <property type="term" value="F:hormone activity"/>
    <property type="evidence" value="ECO:0000266"/>
    <property type="project" value="RGD"/>
</dbReference>
<dbReference type="GO" id="GO:0042802">
    <property type="term" value="F:identical protein binding"/>
    <property type="evidence" value="ECO:0000266"/>
    <property type="project" value="RGD"/>
</dbReference>
<dbReference type="GO" id="GO:0005158">
    <property type="term" value="F:insulin receptor binding"/>
    <property type="evidence" value="ECO:0000266"/>
    <property type="project" value="RGD"/>
</dbReference>
<dbReference type="GO" id="GO:0005159">
    <property type="term" value="F:insulin-like growth factor receptor binding"/>
    <property type="evidence" value="ECO:0000266"/>
    <property type="project" value="RGD"/>
</dbReference>
<dbReference type="GO" id="GO:0002020">
    <property type="term" value="F:protease binding"/>
    <property type="evidence" value="ECO:0000266"/>
    <property type="project" value="RGD"/>
</dbReference>
<dbReference type="GO" id="GO:0008270">
    <property type="term" value="F:zinc ion binding"/>
    <property type="evidence" value="ECO:0000266"/>
    <property type="project" value="RGD"/>
</dbReference>
<dbReference type="GO" id="GO:0006953">
    <property type="term" value="P:acute-phase response"/>
    <property type="evidence" value="ECO:0000266"/>
    <property type="project" value="RGD"/>
</dbReference>
<dbReference type="GO" id="GO:0046631">
    <property type="term" value="P:alpha-beta T cell activation"/>
    <property type="evidence" value="ECO:0000266"/>
    <property type="project" value="RGD"/>
</dbReference>
<dbReference type="GO" id="GO:0006983">
    <property type="term" value="P:ER overload response"/>
    <property type="evidence" value="ECO:0000266"/>
    <property type="project" value="RGD"/>
</dbReference>
<dbReference type="GO" id="GO:0055089">
    <property type="term" value="P:fatty acid homeostasis"/>
    <property type="evidence" value="ECO:0000266"/>
    <property type="project" value="RGD"/>
</dbReference>
<dbReference type="GO" id="GO:0007186">
    <property type="term" value="P:G protein-coupled receptor signaling pathway"/>
    <property type="evidence" value="ECO:0000266"/>
    <property type="project" value="RGD"/>
</dbReference>
<dbReference type="GO" id="GO:0042593">
    <property type="term" value="P:glucose homeostasis"/>
    <property type="evidence" value="ECO:0000266"/>
    <property type="project" value="RGD"/>
</dbReference>
<dbReference type="GO" id="GO:0006006">
    <property type="term" value="P:glucose metabolic process"/>
    <property type="evidence" value="ECO:0000266"/>
    <property type="project" value="RGD"/>
</dbReference>
<dbReference type="GO" id="GO:0009101">
    <property type="term" value="P:glycoprotein biosynthetic process"/>
    <property type="evidence" value="ECO:0000266"/>
    <property type="project" value="RGD"/>
</dbReference>
<dbReference type="GO" id="GO:0030070">
    <property type="term" value="P:insulin processing"/>
    <property type="evidence" value="ECO:0000266"/>
    <property type="project" value="RGD"/>
</dbReference>
<dbReference type="GO" id="GO:0008286">
    <property type="term" value="P:insulin receptor signaling pathway"/>
    <property type="evidence" value="ECO:0000266"/>
    <property type="project" value="RGD"/>
</dbReference>
<dbReference type="GO" id="GO:0070059">
    <property type="term" value="P:intrinsic apoptotic signaling pathway in response to endoplasmic reticulum stress"/>
    <property type="evidence" value="ECO:0000266"/>
    <property type="project" value="RGD"/>
</dbReference>
<dbReference type="GO" id="GO:0019249">
    <property type="term" value="P:lactate biosynthetic process"/>
    <property type="evidence" value="ECO:0000266"/>
    <property type="project" value="RGD"/>
</dbReference>
<dbReference type="GO" id="GO:0008610">
    <property type="term" value="P:lipid biosynthetic process"/>
    <property type="evidence" value="ECO:0000266"/>
    <property type="project" value="RGD"/>
</dbReference>
<dbReference type="GO" id="GO:0016042">
    <property type="term" value="P:lipid catabolic process"/>
    <property type="evidence" value="ECO:0000266"/>
    <property type="project" value="RGD"/>
</dbReference>
<dbReference type="GO" id="GO:0042158">
    <property type="term" value="P:lipoprotein biosynthetic process"/>
    <property type="evidence" value="ECO:0000266"/>
    <property type="project" value="RGD"/>
</dbReference>
<dbReference type="GO" id="GO:0007520">
    <property type="term" value="P:myoblast fusion"/>
    <property type="evidence" value="ECO:0000266"/>
    <property type="project" value="RGD"/>
</dbReference>
<dbReference type="GO" id="GO:0014902">
    <property type="term" value="P:myotube differentiation"/>
    <property type="evidence" value="ECO:0000266"/>
    <property type="project" value="RGD"/>
</dbReference>
<dbReference type="GO" id="GO:0002674">
    <property type="term" value="P:negative regulation of acute inflammatory response"/>
    <property type="evidence" value="ECO:0000266"/>
    <property type="project" value="RGD"/>
</dbReference>
<dbReference type="GO" id="GO:0045922">
    <property type="term" value="P:negative regulation of fatty acid metabolic process"/>
    <property type="evidence" value="ECO:0000266"/>
    <property type="project" value="RGD"/>
</dbReference>
<dbReference type="GO" id="GO:2000252">
    <property type="term" value="P:negative regulation of feeding behavior"/>
    <property type="evidence" value="ECO:0000266"/>
    <property type="project" value="RGD"/>
</dbReference>
<dbReference type="GO" id="GO:0010629">
    <property type="term" value="P:negative regulation of gene expression"/>
    <property type="evidence" value="ECO:0000266"/>
    <property type="project" value="RGD"/>
</dbReference>
<dbReference type="GO" id="GO:0045721">
    <property type="term" value="P:negative regulation of gluconeogenesis"/>
    <property type="evidence" value="ECO:0000266"/>
    <property type="project" value="RGD"/>
</dbReference>
<dbReference type="GO" id="GO:0045818">
    <property type="term" value="P:negative regulation of glycogen catabolic process"/>
    <property type="evidence" value="ECO:0000266"/>
    <property type="project" value="RGD"/>
</dbReference>
<dbReference type="GO" id="GO:0050995">
    <property type="term" value="P:negative regulation of lipid catabolic process"/>
    <property type="evidence" value="ECO:0000266"/>
    <property type="project" value="RGD"/>
</dbReference>
<dbReference type="GO" id="GO:0042177">
    <property type="term" value="P:negative regulation of protein catabolic process"/>
    <property type="evidence" value="ECO:0000266"/>
    <property type="project" value="RGD"/>
</dbReference>
<dbReference type="GO" id="GO:0050709">
    <property type="term" value="P:negative regulation of protein secretion"/>
    <property type="evidence" value="ECO:0000266"/>
    <property type="project" value="RGD"/>
</dbReference>
<dbReference type="GO" id="GO:1903427">
    <property type="term" value="P:negative regulation of reactive oxygen species biosynthetic process"/>
    <property type="evidence" value="ECO:0000266"/>
    <property type="project" value="RGD"/>
</dbReference>
<dbReference type="GO" id="GO:0060266">
    <property type="term" value="P:negative regulation of respiratory burst involved in inflammatory response"/>
    <property type="evidence" value="ECO:0000266"/>
    <property type="project" value="RGD"/>
</dbReference>
<dbReference type="GO" id="GO:0000122">
    <property type="term" value="P:negative regulation of transcription by RNA polymerase II"/>
    <property type="evidence" value="ECO:0000266"/>
    <property type="project" value="RGD"/>
</dbReference>
<dbReference type="GO" id="GO:1990535">
    <property type="term" value="P:neuron projection maintenance"/>
    <property type="evidence" value="ECO:0000266"/>
    <property type="project" value="RGD"/>
</dbReference>
<dbReference type="GO" id="GO:0038060">
    <property type="term" value="P:nitric oxide-cGMP-mediated signaling"/>
    <property type="evidence" value="ECO:0000266"/>
    <property type="project" value="RGD"/>
</dbReference>
<dbReference type="GO" id="GO:0043123">
    <property type="term" value="P:positive regulation of canonical NF-kappaB signal transduction"/>
    <property type="evidence" value="ECO:0000266"/>
    <property type="project" value="RGD"/>
</dbReference>
<dbReference type="GO" id="GO:0030335">
    <property type="term" value="P:positive regulation of cell migration"/>
    <property type="evidence" value="ECO:0000266"/>
    <property type="project" value="RGD"/>
</dbReference>
<dbReference type="GO" id="GO:0008284">
    <property type="term" value="P:positive regulation of cell population proliferation"/>
    <property type="evidence" value="ECO:0000266"/>
    <property type="project" value="RGD"/>
</dbReference>
<dbReference type="GO" id="GO:0001819">
    <property type="term" value="P:positive regulation of cytokine production"/>
    <property type="evidence" value="ECO:0000266"/>
    <property type="project" value="RGD"/>
</dbReference>
<dbReference type="GO" id="GO:0046326">
    <property type="term" value="P:positive regulation of D-glucose import"/>
    <property type="evidence" value="ECO:0000266"/>
    <property type="project" value="RGD"/>
</dbReference>
<dbReference type="GO" id="GO:1902952">
    <property type="term" value="P:positive regulation of dendritic spine maintenance"/>
    <property type="evidence" value="ECO:0000266"/>
    <property type="project" value="RGD"/>
</dbReference>
<dbReference type="GO" id="GO:0045740">
    <property type="term" value="P:positive regulation of DNA replication"/>
    <property type="evidence" value="ECO:0000266"/>
    <property type="project" value="RGD"/>
</dbReference>
<dbReference type="GO" id="GO:0070374">
    <property type="term" value="P:positive regulation of ERK1 and ERK2 cascade"/>
    <property type="evidence" value="ECO:0000266"/>
    <property type="project" value="RGD"/>
</dbReference>
<dbReference type="GO" id="GO:0045723">
    <property type="term" value="P:positive regulation of fatty acid biosynthetic process"/>
    <property type="evidence" value="ECO:0000266"/>
    <property type="project" value="RGD"/>
</dbReference>
<dbReference type="GO" id="GO:0010628">
    <property type="term" value="P:positive regulation of gene expression"/>
    <property type="evidence" value="ECO:0000266"/>
    <property type="project" value="RGD"/>
</dbReference>
<dbReference type="GO" id="GO:0010907">
    <property type="term" value="P:positive regulation of glucose metabolic process"/>
    <property type="evidence" value="ECO:0000266"/>
    <property type="project" value="RGD"/>
</dbReference>
<dbReference type="GO" id="GO:0045725">
    <property type="term" value="P:positive regulation of glycogen biosynthetic process"/>
    <property type="evidence" value="ECO:0000266"/>
    <property type="project" value="RGD"/>
</dbReference>
<dbReference type="GO" id="GO:0045821">
    <property type="term" value="P:positive regulation of glycolytic process"/>
    <property type="evidence" value="ECO:0000266"/>
    <property type="project" value="RGD"/>
</dbReference>
<dbReference type="GO" id="GO:0046628">
    <property type="term" value="P:positive regulation of insulin receptor signaling pathway"/>
    <property type="evidence" value="ECO:0000266"/>
    <property type="project" value="RGD"/>
</dbReference>
<dbReference type="GO" id="GO:0043410">
    <property type="term" value="P:positive regulation of MAPK cascade"/>
    <property type="evidence" value="ECO:0000266"/>
    <property type="project" value="RGD"/>
</dbReference>
<dbReference type="GO" id="GO:0045840">
    <property type="term" value="P:positive regulation of mitotic nuclear division"/>
    <property type="evidence" value="ECO:0000266"/>
    <property type="project" value="RGD"/>
</dbReference>
<dbReference type="GO" id="GO:0010750">
    <property type="term" value="P:positive regulation of nitric oxide mediated signal transduction"/>
    <property type="evidence" value="ECO:0000266"/>
    <property type="project" value="RGD"/>
</dbReference>
<dbReference type="GO" id="GO:0051897">
    <property type="term" value="P:positive regulation of phosphatidylinositol 3-kinase/protein kinase B signal transduction"/>
    <property type="evidence" value="ECO:0000266"/>
    <property type="project" value="RGD"/>
</dbReference>
<dbReference type="GO" id="GO:1900182">
    <property type="term" value="P:positive regulation of protein localization to nucleus"/>
    <property type="evidence" value="ECO:0000266"/>
    <property type="project" value="RGD"/>
</dbReference>
<dbReference type="GO" id="GO:0050714">
    <property type="term" value="P:positive regulation of protein secretion"/>
    <property type="evidence" value="ECO:0000318"/>
    <property type="project" value="GO_Central"/>
</dbReference>
<dbReference type="GO" id="GO:0060267">
    <property type="term" value="P:positive regulation of respiratory burst"/>
    <property type="evidence" value="ECO:0000266"/>
    <property type="project" value="RGD"/>
</dbReference>
<dbReference type="GO" id="GO:0031623">
    <property type="term" value="P:receptor internalization"/>
    <property type="evidence" value="ECO:0000266"/>
    <property type="project" value="RGD"/>
</dbReference>
<dbReference type="GO" id="GO:0010468">
    <property type="term" value="P:regulation of gene expression"/>
    <property type="evidence" value="ECO:0000266"/>
    <property type="project" value="RGD"/>
</dbReference>
<dbReference type="GO" id="GO:0032880">
    <property type="term" value="P:regulation of protein localization"/>
    <property type="evidence" value="ECO:0000266"/>
    <property type="project" value="RGD"/>
</dbReference>
<dbReference type="GO" id="GO:1903076">
    <property type="term" value="P:regulation of protein localization to plasma membrane"/>
    <property type="evidence" value="ECO:0000266"/>
    <property type="project" value="RGD"/>
</dbReference>
<dbReference type="GO" id="GO:0050708">
    <property type="term" value="P:regulation of protein secretion"/>
    <property type="evidence" value="ECO:0000266"/>
    <property type="project" value="RGD"/>
</dbReference>
<dbReference type="GO" id="GO:0042311">
    <property type="term" value="P:vasodilation"/>
    <property type="evidence" value="ECO:0000266"/>
    <property type="project" value="RGD"/>
</dbReference>
<dbReference type="GO" id="GO:0042060">
    <property type="term" value="P:wound healing"/>
    <property type="evidence" value="ECO:0000266"/>
    <property type="project" value="RGD"/>
</dbReference>
<dbReference type="CDD" id="cd04367">
    <property type="entry name" value="IlGF_insulin_like"/>
    <property type="match status" value="1"/>
</dbReference>
<dbReference type="FunFam" id="1.10.100.10:FF:000003">
    <property type="entry name" value="Insulin"/>
    <property type="match status" value="1"/>
</dbReference>
<dbReference type="Gene3D" id="1.10.100.10">
    <property type="entry name" value="Insulin-like"/>
    <property type="match status" value="1"/>
</dbReference>
<dbReference type="InterPro" id="IPR004825">
    <property type="entry name" value="Insulin"/>
</dbReference>
<dbReference type="InterPro" id="IPR016179">
    <property type="entry name" value="Insulin-like"/>
</dbReference>
<dbReference type="InterPro" id="IPR036438">
    <property type="entry name" value="Insulin-like_sf"/>
</dbReference>
<dbReference type="InterPro" id="IPR022353">
    <property type="entry name" value="Insulin_CS"/>
</dbReference>
<dbReference type="InterPro" id="IPR022352">
    <property type="entry name" value="Insulin_family"/>
</dbReference>
<dbReference type="PANTHER" id="PTHR11454:SF33">
    <property type="entry name" value="INSULIN-2"/>
    <property type="match status" value="1"/>
</dbReference>
<dbReference type="PANTHER" id="PTHR11454">
    <property type="entry name" value="INSULIN/INSULIN GROWTH FACTOR"/>
    <property type="match status" value="1"/>
</dbReference>
<dbReference type="Pfam" id="PF00049">
    <property type="entry name" value="Insulin"/>
    <property type="match status" value="1"/>
</dbReference>
<dbReference type="PRINTS" id="PR00277">
    <property type="entry name" value="INSULIN"/>
</dbReference>
<dbReference type="PRINTS" id="PR00276">
    <property type="entry name" value="INSULINFAMLY"/>
</dbReference>
<dbReference type="SMART" id="SM00078">
    <property type="entry name" value="IlGF"/>
    <property type="match status" value="1"/>
</dbReference>
<dbReference type="SUPFAM" id="SSF56994">
    <property type="entry name" value="Insulin-like"/>
    <property type="match status" value="1"/>
</dbReference>
<dbReference type="PROSITE" id="PS00262">
    <property type="entry name" value="INSULIN"/>
    <property type="match status" value="1"/>
</dbReference>
<gene>
    <name type="primary">Ins2</name>
    <name type="synonym">Ins-2</name>
</gene>
<sequence>MALWIRFLPLLALLILWEPRPAQAFVKQHLCGSHLVEALYLVCGERGFFYTPMSRREVEDPQVAQLELGGGPGAGDLQTLALEVARQKRGIVDQCCTSICSLYQLENYCN</sequence>